<sequence>MKSLIFVLLLGAVFAEEDKIVGGYECTKHSQAHQVSLNSGYHFCGGSLVSKDWVVSAAHCYKSVLRVRLGEHHIRVNEGTEQYISSSSVIRHPNYSSYNINNDIMLIKLTKPATLNQYVHAVALPTECAADATMCTVSGWGNTMSSVADGDKLQCLSLPILSHADCANSYPGMITQSMFCAGYLEGGKDSCQGDSGGPVVCNGVLQGVVSWGYGCAERDHPGVYAKVCVLSGWVRDTMANY</sequence>
<accession>P16049</accession>
<accession>Q91040</accession>
<accession>Q92156</accession>
<keyword id="KW-0002">3D-structure</keyword>
<keyword id="KW-0222">Digestion</keyword>
<keyword id="KW-0903">Direct protein sequencing</keyword>
<keyword id="KW-1015">Disulfide bond</keyword>
<keyword id="KW-0378">Hydrolase</keyword>
<keyword id="KW-0645">Protease</keyword>
<keyword id="KW-1185">Reference proteome</keyword>
<keyword id="KW-0964">Secreted</keyword>
<keyword id="KW-0720">Serine protease</keyword>
<keyword id="KW-0732">Signal</keyword>
<keyword id="KW-0865">Zymogen</keyword>
<protein>
    <recommendedName>
        <fullName>Trypsin-1</fullName>
        <ecNumber>3.4.21.4</ecNumber>
    </recommendedName>
    <alternativeName>
        <fullName>Trypsin I</fullName>
    </alternativeName>
</protein>
<dbReference type="EC" id="3.4.21.4"/>
<dbReference type="EMBL" id="X76886">
    <property type="protein sequence ID" value="CAA54214.1"/>
    <property type="molecule type" value="mRNA"/>
</dbReference>
<dbReference type="PIR" id="S39047">
    <property type="entry name" value="S39047"/>
</dbReference>
<dbReference type="PDB" id="2EEK">
    <property type="method" value="X-ray"/>
    <property type="resolution" value="1.85 A"/>
    <property type="chains" value="A=20-239"/>
</dbReference>
<dbReference type="PDBsum" id="2EEK"/>
<dbReference type="SMR" id="P16049"/>
<dbReference type="MEROPS" id="S01.125"/>
<dbReference type="EvolutionaryTrace" id="P16049"/>
<dbReference type="Proteomes" id="UP000694546">
    <property type="component" value="Unplaced"/>
</dbReference>
<dbReference type="GO" id="GO:0005615">
    <property type="term" value="C:extracellular space"/>
    <property type="evidence" value="ECO:0007669"/>
    <property type="project" value="TreeGrafter"/>
</dbReference>
<dbReference type="GO" id="GO:0004252">
    <property type="term" value="F:serine-type endopeptidase activity"/>
    <property type="evidence" value="ECO:0007669"/>
    <property type="project" value="UniProtKB-EC"/>
</dbReference>
<dbReference type="GO" id="GO:0007586">
    <property type="term" value="P:digestion"/>
    <property type="evidence" value="ECO:0007669"/>
    <property type="project" value="UniProtKB-KW"/>
</dbReference>
<dbReference type="GO" id="GO:0006508">
    <property type="term" value="P:proteolysis"/>
    <property type="evidence" value="ECO:0007669"/>
    <property type="project" value="UniProtKB-KW"/>
</dbReference>
<dbReference type="CDD" id="cd00190">
    <property type="entry name" value="Tryp_SPc"/>
    <property type="match status" value="1"/>
</dbReference>
<dbReference type="FunFam" id="2.40.10.10:FF:000008">
    <property type="entry name" value="Cationic trypsin"/>
    <property type="match status" value="1"/>
</dbReference>
<dbReference type="FunFam" id="2.40.10.10:FF:000005">
    <property type="entry name" value="Serine protease 37"/>
    <property type="match status" value="1"/>
</dbReference>
<dbReference type="Gene3D" id="2.40.10.10">
    <property type="entry name" value="Trypsin-like serine proteases"/>
    <property type="match status" value="2"/>
</dbReference>
<dbReference type="InterPro" id="IPR009003">
    <property type="entry name" value="Peptidase_S1_PA"/>
</dbReference>
<dbReference type="InterPro" id="IPR043504">
    <property type="entry name" value="Peptidase_S1_PA_chymotrypsin"/>
</dbReference>
<dbReference type="InterPro" id="IPR001314">
    <property type="entry name" value="Peptidase_S1A"/>
</dbReference>
<dbReference type="InterPro" id="IPR050127">
    <property type="entry name" value="Serine_Proteases_S1"/>
</dbReference>
<dbReference type="InterPro" id="IPR001254">
    <property type="entry name" value="Trypsin_dom"/>
</dbReference>
<dbReference type="InterPro" id="IPR018114">
    <property type="entry name" value="TRYPSIN_HIS"/>
</dbReference>
<dbReference type="InterPro" id="IPR033116">
    <property type="entry name" value="TRYPSIN_SER"/>
</dbReference>
<dbReference type="PANTHER" id="PTHR24264">
    <property type="entry name" value="TRYPSIN-RELATED"/>
    <property type="match status" value="1"/>
</dbReference>
<dbReference type="PANTHER" id="PTHR24264:SF6">
    <property type="entry name" value="TRYPSINOGEN 1A-RELATED"/>
    <property type="match status" value="1"/>
</dbReference>
<dbReference type="Pfam" id="PF00089">
    <property type="entry name" value="Trypsin"/>
    <property type="match status" value="1"/>
</dbReference>
<dbReference type="PRINTS" id="PR00722">
    <property type="entry name" value="CHYMOTRYPSIN"/>
</dbReference>
<dbReference type="SMART" id="SM00020">
    <property type="entry name" value="Tryp_SPc"/>
    <property type="match status" value="1"/>
</dbReference>
<dbReference type="SUPFAM" id="SSF50494">
    <property type="entry name" value="Trypsin-like serine proteases"/>
    <property type="match status" value="1"/>
</dbReference>
<dbReference type="PROSITE" id="PS50240">
    <property type="entry name" value="TRYPSIN_DOM"/>
    <property type="match status" value="1"/>
</dbReference>
<dbReference type="PROSITE" id="PS00134">
    <property type="entry name" value="TRYPSIN_HIS"/>
    <property type="match status" value="1"/>
</dbReference>
<dbReference type="PROSITE" id="PS00135">
    <property type="entry name" value="TRYPSIN_SER"/>
    <property type="match status" value="1"/>
</dbReference>
<feature type="signal peptide" evidence="2">
    <location>
        <begin position="1"/>
        <end position="13"/>
    </location>
</feature>
<feature type="propeptide" id="PRO_0000028309" description="Activation peptide" evidence="4">
    <location>
        <begin position="14"/>
        <end position="19"/>
    </location>
</feature>
<feature type="chain" id="PRO_0000028310" description="Trypsin-1">
    <location>
        <begin position="20"/>
        <end position="241"/>
    </location>
</feature>
<feature type="domain" description="Peptidase S1" evidence="3">
    <location>
        <begin position="20"/>
        <end position="239"/>
    </location>
</feature>
<feature type="active site" description="Charge relay system" evidence="1">
    <location>
        <position position="59"/>
    </location>
</feature>
<feature type="active site" description="Charge relay system" evidence="1">
    <location>
        <position position="103"/>
    </location>
</feature>
<feature type="active site" description="Charge relay system" evidence="1">
    <location>
        <position position="195"/>
    </location>
</feature>
<feature type="site" description="Required for specificity" evidence="1">
    <location>
        <position position="189"/>
    </location>
</feature>
<feature type="disulfide bond" evidence="3">
    <location>
        <begin position="26"/>
        <end position="155"/>
    </location>
</feature>
<feature type="disulfide bond" evidence="3">
    <location>
        <begin position="44"/>
        <end position="60"/>
    </location>
</feature>
<feature type="disulfide bond" evidence="3">
    <location>
        <begin position="128"/>
        <end position="228"/>
    </location>
</feature>
<feature type="disulfide bond" evidence="3">
    <location>
        <begin position="135"/>
        <end position="201"/>
    </location>
</feature>
<feature type="disulfide bond" evidence="3">
    <location>
        <begin position="166"/>
        <end position="180"/>
    </location>
</feature>
<feature type="disulfide bond" evidence="3">
    <location>
        <begin position="191"/>
        <end position="215"/>
    </location>
</feature>
<feature type="sequence conflict" description="In Ref. 2; AA sequence." evidence="5" ref="2">
    <original>E</original>
    <variation>Q</variation>
    <location>
        <position position="25"/>
    </location>
</feature>
<feature type="sequence conflict" description="In Ref. 2; AA sequence." evidence="5" ref="2">
    <original>TK</original>
    <variation>EA</variation>
    <location>
        <begin position="27"/>
        <end position="28"/>
    </location>
</feature>
<feature type="sequence conflict" description="In Ref. 2; AA sequence." evidence="5" ref="2">
    <original>F</original>
    <variation>Y</variation>
    <location>
        <position position="43"/>
    </location>
</feature>
<feature type="sequence conflict" description="In Ref. 2; AA sequence." evidence="5" ref="2">
    <original>VSKD</original>
    <variation>IN</variation>
    <location>
        <begin position="49"/>
        <end position="52"/>
    </location>
</feature>
<feature type="turn" evidence="6">
    <location>
        <begin position="28"/>
        <end position="33"/>
    </location>
</feature>
<feature type="strand" evidence="6">
    <location>
        <begin position="34"/>
        <end position="48"/>
    </location>
</feature>
<feature type="strand" evidence="6">
    <location>
        <begin position="50"/>
        <end position="56"/>
    </location>
</feature>
<feature type="helix" evidence="6">
    <location>
        <begin position="58"/>
        <end position="60"/>
    </location>
</feature>
<feature type="strand" evidence="6">
    <location>
        <begin position="66"/>
        <end position="70"/>
    </location>
</feature>
<feature type="strand" evidence="6">
    <location>
        <begin position="82"/>
        <end position="91"/>
    </location>
</feature>
<feature type="turn" evidence="6">
    <location>
        <begin position="97"/>
        <end position="100"/>
    </location>
</feature>
<feature type="strand" evidence="6">
    <location>
        <begin position="105"/>
        <end position="111"/>
    </location>
</feature>
<feature type="strand" evidence="6">
    <location>
        <begin position="116"/>
        <end position="118"/>
    </location>
</feature>
<feature type="strand" evidence="6">
    <location>
        <begin position="134"/>
        <end position="141"/>
    </location>
</feature>
<feature type="strand" evidence="6">
    <location>
        <begin position="146"/>
        <end position="148"/>
    </location>
</feature>
<feature type="strand" evidence="6">
    <location>
        <begin position="154"/>
        <end position="160"/>
    </location>
</feature>
<feature type="helix" evidence="6">
    <location>
        <begin position="163"/>
        <end position="169"/>
    </location>
</feature>
<feature type="turn" evidence="6">
    <location>
        <begin position="171"/>
        <end position="173"/>
    </location>
</feature>
<feature type="strand" evidence="6">
    <location>
        <begin position="178"/>
        <end position="182"/>
    </location>
</feature>
<feature type="strand" evidence="6">
    <location>
        <begin position="198"/>
        <end position="201"/>
    </location>
</feature>
<feature type="strand" evidence="6">
    <location>
        <begin position="204"/>
        <end position="211"/>
    </location>
</feature>
<feature type="strand" evidence="6">
    <location>
        <begin position="213"/>
        <end position="216"/>
    </location>
</feature>
<feature type="strand" evidence="6">
    <location>
        <begin position="222"/>
        <end position="226"/>
    </location>
</feature>
<feature type="helix" evidence="6">
    <location>
        <begin position="227"/>
        <end position="238"/>
    </location>
</feature>
<proteinExistence type="evidence at protein level"/>
<name>TRY1_GADMO</name>
<reference key="1">
    <citation type="journal article" date="1993" name="Eur. J. Biochem.">
        <title>Isolation and characterization of cDNAs from Atlantic cod encoding two different forms of trypsinogen.</title>
        <authorList>
            <person name="Gudmundsdottir A."/>
            <person name="Gudmundsdottir E."/>
            <person name="Oskarsson S."/>
            <person name="Bjarnason J.B."/>
            <person name="Eakin A.E."/>
            <person name="Craik C.S."/>
        </authorList>
    </citation>
    <scope>NUCLEOTIDE SEQUENCE [MRNA]</scope>
    <source>
        <tissue>Pyloric caecum</tissue>
    </source>
</reference>
<reference key="2">
    <citation type="journal article" date="1989" name="Eur. J. Biochem.">
        <title>Purification and characterization of trypsin from the poikilotherm Gadus morhua.</title>
        <authorList>
            <person name="Asgeirsson B."/>
            <person name="Fox J.W."/>
            <person name="Bjarnason J.B."/>
        </authorList>
    </citation>
    <scope>PROTEIN SEQUENCE OF 20-58</scope>
    <source>
        <tissue>Pyloric caecum</tissue>
    </source>
</reference>
<organism>
    <name type="scientific">Gadus morhua</name>
    <name type="common">Atlantic cod</name>
    <dbReference type="NCBI Taxonomy" id="8049"/>
    <lineage>
        <taxon>Eukaryota</taxon>
        <taxon>Metazoa</taxon>
        <taxon>Chordata</taxon>
        <taxon>Craniata</taxon>
        <taxon>Vertebrata</taxon>
        <taxon>Euteleostomi</taxon>
        <taxon>Actinopterygii</taxon>
        <taxon>Neopterygii</taxon>
        <taxon>Teleostei</taxon>
        <taxon>Neoteleostei</taxon>
        <taxon>Acanthomorphata</taxon>
        <taxon>Zeiogadaria</taxon>
        <taxon>Gadariae</taxon>
        <taxon>Gadiformes</taxon>
        <taxon>Gadoidei</taxon>
        <taxon>Gadidae</taxon>
        <taxon>Gadus</taxon>
    </lineage>
</organism>
<comment type="catalytic activity">
    <reaction>
        <text>Preferential cleavage: Arg-|-Xaa, Lys-|-Xaa.</text>
        <dbReference type="EC" id="3.4.21.4"/>
    </reaction>
</comment>
<comment type="subcellular location">
    <subcellularLocation>
        <location>Secreted</location>
        <location>Extracellular space</location>
    </subcellularLocation>
</comment>
<comment type="similarity">
    <text evidence="3">Belongs to the peptidase S1 family.</text>
</comment>
<evidence type="ECO:0000250" key="1"/>
<evidence type="ECO:0000255" key="2"/>
<evidence type="ECO:0000255" key="3">
    <source>
        <dbReference type="PROSITE-ProRule" id="PRU00274"/>
    </source>
</evidence>
<evidence type="ECO:0000269" key="4">
    <source>
    </source>
</evidence>
<evidence type="ECO:0000305" key="5"/>
<evidence type="ECO:0007829" key="6">
    <source>
        <dbReference type="PDB" id="2EEK"/>
    </source>
</evidence>